<protein>
    <recommendedName>
        <fullName evidence="1">Holliday junction branch migration complex subunit RuvB</fullName>
        <ecNumber evidence="1">3.6.4.-</ecNumber>
    </recommendedName>
</protein>
<name>RUVB_AZOSB</name>
<gene>
    <name evidence="1" type="primary">ruvB</name>
    <name type="ordered locus">azo0601</name>
</gene>
<reference key="1">
    <citation type="journal article" date="2006" name="Nat. Biotechnol.">
        <title>Complete genome of the mutualistic, N2-fixing grass endophyte Azoarcus sp. strain BH72.</title>
        <authorList>
            <person name="Krause A."/>
            <person name="Ramakumar A."/>
            <person name="Bartels D."/>
            <person name="Battistoni F."/>
            <person name="Bekel T."/>
            <person name="Boch J."/>
            <person name="Boehm M."/>
            <person name="Friedrich F."/>
            <person name="Hurek T."/>
            <person name="Krause L."/>
            <person name="Linke B."/>
            <person name="McHardy A.C."/>
            <person name="Sarkar A."/>
            <person name="Schneiker S."/>
            <person name="Syed A.A."/>
            <person name="Thauer R."/>
            <person name="Vorhoelter F.-J."/>
            <person name="Weidner S."/>
            <person name="Puehler A."/>
            <person name="Reinhold-Hurek B."/>
            <person name="Kaiser O."/>
            <person name="Goesmann A."/>
        </authorList>
    </citation>
    <scope>NUCLEOTIDE SEQUENCE [LARGE SCALE GENOMIC DNA]</scope>
    <source>
        <strain>BH72</strain>
    </source>
</reference>
<feature type="chain" id="PRO_1000001361" description="Holliday junction branch migration complex subunit RuvB">
    <location>
        <begin position="1"/>
        <end position="352"/>
    </location>
</feature>
<feature type="region of interest" description="Disordered" evidence="2">
    <location>
        <begin position="1"/>
        <end position="26"/>
    </location>
</feature>
<feature type="region of interest" description="Large ATPase domain (RuvB-L)" evidence="1">
    <location>
        <begin position="4"/>
        <end position="193"/>
    </location>
</feature>
<feature type="region of interest" description="Small ATPAse domain (RuvB-S)" evidence="1">
    <location>
        <begin position="194"/>
        <end position="264"/>
    </location>
</feature>
<feature type="region of interest" description="Head domain (RuvB-H)" evidence="1">
    <location>
        <begin position="267"/>
        <end position="352"/>
    </location>
</feature>
<feature type="binding site" evidence="1">
    <location>
        <position position="32"/>
    </location>
    <ligand>
        <name>ATP</name>
        <dbReference type="ChEBI" id="CHEBI:30616"/>
    </ligand>
</feature>
<feature type="binding site" evidence="1">
    <location>
        <position position="33"/>
    </location>
    <ligand>
        <name>ATP</name>
        <dbReference type="ChEBI" id="CHEBI:30616"/>
    </ligand>
</feature>
<feature type="binding site" evidence="1">
    <location>
        <position position="74"/>
    </location>
    <ligand>
        <name>ATP</name>
        <dbReference type="ChEBI" id="CHEBI:30616"/>
    </ligand>
</feature>
<feature type="binding site" evidence="1">
    <location>
        <position position="77"/>
    </location>
    <ligand>
        <name>ATP</name>
        <dbReference type="ChEBI" id="CHEBI:30616"/>
    </ligand>
</feature>
<feature type="binding site" evidence="1">
    <location>
        <position position="78"/>
    </location>
    <ligand>
        <name>ATP</name>
        <dbReference type="ChEBI" id="CHEBI:30616"/>
    </ligand>
</feature>
<feature type="binding site" evidence="1">
    <location>
        <position position="78"/>
    </location>
    <ligand>
        <name>Mg(2+)</name>
        <dbReference type="ChEBI" id="CHEBI:18420"/>
    </ligand>
</feature>
<feature type="binding site" evidence="1">
    <location>
        <position position="79"/>
    </location>
    <ligand>
        <name>ATP</name>
        <dbReference type="ChEBI" id="CHEBI:30616"/>
    </ligand>
</feature>
<feature type="binding site" evidence="1">
    <location>
        <begin position="140"/>
        <end position="142"/>
    </location>
    <ligand>
        <name>ATP</name>
        <dbReference type="ChEBI" id="CHEBI:30616"/>
    </ligand>
</feature>
<feature type="binding site" evidence="1">
    <location>
        <position position="183"/>
    </location>
    <ligand>
        <name>ATP</name>
        <dbReference type="ChEBI" id="CHEBI:30616"/>
    </ligand>
</feature>
<feature type="binding site" evidence="1">
    <location>
        <position position="193"/>
    </location>
    <ligand>
        <name>ATP</name>
        <dbReference type="ChEBI" id="CHEBI:30616"/>
    </ligand>
</feature>
<feature type="binding site" evidence="1">
    <location>
        <position position="230"/>
    </location>
    <ligand>
        <name>ATP</name>
        <dbReference type="ChEBI" id="CHEBI:30616"/>
    </ligand>
</feature>
<feature type="binding site" evidence="1">
    <location>
        <position position="322"/>
    </location>
    <ligand>
        <name>DNA</name>
        <dbReference type="ChEBI" id="CHEBI:16991"/>
    </ligand>
</feature>
<feature type="binding site" evidence="1">
    <location>
        <position position="327"/>
    </location>
    <ligand>
        <name>DNA</name>
        <dbReference type="ChEBI" id="CHEBI:16991"/>
    </ligand>
</feature>
<keyword id="KW-0067">ATP-binding</keyword>
<keyword id="KW-0963">Cytoplasm</keyword>
<keyword id="KW-0227">DNA damage</keyword>
<keyword id="KW-0233">DNA recombination</keyword>
<keyword id="KW-0234">DNA repair</keyword>
<keyword id="KW-0238">DNA-binding</keyword>
<keyword id="KW-0378">Hydrolase</keyword>
<keyword id="KW-0547">Nucleotide-binding</keyword>
<keyword id="KW-1185">Reference proteome</keyword>
<dbReference type="EC" id="3.6.4.-" evidence="1"/>
<dbReference type="EMBL" id="AM406670">
    <property type="protein sequence ID" value="CAL93218.1"/>
    <property type="molecule type" value="Genomic_DNA"/>
</dbReference>
<dbReference type="RefSeq" id="WP_011764336.1">
    <property type="nucleotide sequence ID" value="NC_008702.1"/>
</dbReference>
<dbReference type="SMR" id="A1K313"/>
<dbReference type="STRING" id="62928.azo0601"/>
<dbReference type="KEGG" id="aoa:dqs_0669"/>
<dbReference type="KEGG" id="azo:azo0601"/>
<dbReference type="eggNOG" id="COG2255">
    <property type="taxonomic scope" value="Bacteria"/>
</dbReference>
<dbReference type="HOGENOM" id="CLU_055599_1_0_4"/>
<dbReference type="OrthoDB" id="9804478at2"/>
<dbReference type="Proteomes" id="UP000002588">
    <property type="component" value="Chromosome"/>
</dbReference>
<dbReference type="GO" id="GO:0005737">
    <property type="term" value="C:cytoplasm"/>
    <property type="evidence" value="ECO:0007669"/>
    <property type="project" value="UniProtKB-SubCell"/>
</dbReference>
<dbReference type="GO" id="GO:0048476">
    <property type="term" value="C:Holliday junction resolvase complex"/>
    <property type="evidence" value="ECO:0007669"/>
    <property type="project" value="UniProtKB-UniRule"/>
</dbReference>
<dbReference type="GO" id="GO:0005524">
    <property type="term" value="F:ATP binding"/>
    <property type="evidence" value="ECO:0007669"/>
    <property type="project" value="UniProtKB-UniRule"/>
</dbReference>
<dbReference type="GO" id="GO:0016887">
    <property type="term" value="F:ATP hydrolysis activity"/>
    <property type="evidence" value="ECO:0007669"/>
    <property type="project" value="InterPro"/>
</dbReference>
<dbReference type="GO" id="GO:0000400">
    <property type="term" value="F:four-way junction DNA binding"/>
    <property type="evidence" value="ECO:0007669"/>
    <property type="project" value="UniProtKB-UniRule"/>
</dbReference>
<dbReference type="GO" id="GO:0009378">
    <property type="term" value="F:four-way junction helicase activity"/>
    <property type="evidence" value="ECO:0007669"/>
    <property type="project" value="InterPro"/>
</dbReference>
<dbReference type="GO" id="GO:0006310">
    <property type="term" value="P:DNA recombination"/>
    <property type="evidence" value="ECO:0007669"/>
    <property type="project" value="UniProtKB-UniRule"/>
</dbReference>
<dbReference type="GO" id="GO:0006281">
    <property type="term" value="P:DNA repair"/>
    <property type="evidence" value="ECO:0007669"/>
    <property type="project" value="UniProtKB-UniRule"/>
</dbReference>
<dbReference type="CDD" id="cd00009">
    <property type="entry name" value="AAA"/>
    <property type="match status" value="1"/>
</dbReference>
<dbReference type="FunFam" id="1.10.10.10:FF:000086">
    <property type="entry name" value="Holliday junction ATP-dependent DNA helicase RuvB"/>
    <property type="match status" value="1"/>
</dbReference>
<dbReference type="FunFam" id="1.10.8.60:FF:000023">
    <property type="entry name" value="Holliday junction ATP-dependent DNA helicase RuvB"/>
    <property type="match status" value="1"/>
</dbReference>
<dbReference type="FunFam" id="3.40.50.300:FF:000073">
    <property type="entry name" value="Holliday junction ATP-dependent DNA helicase RuvB"/>
    <property type="match status" value="1"/>
</dbReference>
<dbReference type="Gene3D" id="1.10.8.60">
    <property type="match status" value="1"/>
</dbReference>
<dbReference type="Gene3D" id="3.40.50.300">
    <property type="entry name" value="P-loop containing nucleotide triphosphate hydrolases"/>
    <property type="match status" value="1"/>
</dbReference>
<dbReference type="Gene3D" id="1.10.10.10">
    <property type="entry name" value="Winged helix-like DNA-binding domain superfamily/Winged helix DNA-binding domain"/>
    <property type="match status" value="1"/>
</dbReference>
<dbReference type="HAMAP" id="MF_00016">
    <property type="entry name" value="DNA_HJ_migration_RuvB"/>
    <property type="match status" value="1"/>
</dbReference>
<dbReference type="InterPro" id="IPR003593">
    <property type="entry name" value="AAA+_ATPase"/>
</dbReference>
<dbReference type="InterPro" id="IPR041445">
    <property type="entry name" value="AAA_lid_4"/>
</dbReference>
<dbReference type="InterPro" id="IPR004605">
    <property type="entry name" value="DNA_helicase_Holl-junc_RuvB"/>
</dbReference>
<dbReference type="InterPro" id="IPR027417">
    <property type="entry name" value="P-loop_NTPase"/>
</dbReference>
<dbReference type="InterPro" id="IPR008824">
    <property type="entry name" value="RuvB-like_N"/>
</dbReference>
<dbReference type="InterPro" id="IPR008823">
    <property type="entry name" value="RuvB_C"/>
</dbReference>
<dbReference type="InterPro" id="IPR036388">
    <property type="entry name" value="WH-like_DNA-bd_sf"/>
</dbReference>
<dbReference type="InterPro" id="IPR036390">
    <property type="entry name" value="WH_DNA-bd_sf"/>
</dbReference>
<dbReference type="NCBIfam" id="NF000868">
    <property type="entry name" value="PRK00080.1"/>
    <property type="match status" value="1"/>
</dbReference>
<dbReference type="NCBIfam" id="TIGR00635">
    <property type="entry name" value="ruvB"/>
    <property type="match status" value="1"/>
</dbReference>
<dbReference type="PANTHER" id="PTHR42848">
    <property type="match status" value="1"/>
</dbReference>
<dbReference type="PANTHER" id="PTHR42848:SF1">
    <property type="entry name" value="HOLLIDAY JUNCTION BRANCH MIGRATION COMPLEX SUBUNIT RUVB"/>
    <property type="match status" value="1"/>
</dbReference>
<dbReference type="Pfam" id="PF17864">
    <property type="entry name" value="AAA_lid_4"/>
    <property type="match status" value="1"/>
</dbReference>
<dbReference type="Pfam" id="PF05491">
    <property type="entry name" value="RuvB_C"/>
    <property type="match status" value="1"/>
</dbReference>
<dbReference type="Pfam" id="PF05496">
    <property type="entry name" value="RuvB_N"/>
    <property type="match status" value="1"/>
</dbReference>
<dbReference type="SMART" id="SM00382">
    <property type="entry name" value="AAA"/>
    <property type="match status" value="1"/>
</dbReference>
<dbReference type="SUPFAM" id="SSF52540">
    <property type="entry name" value="P-loop containing nucleoside triphosphate hydrolases"/>
    <property type="match status" value="1"/>
</dbReference>
<dbReference type="SUPFAM" id="SSF46785">
    <property type="entry name" value="Winged helix' DNA-binding domain"/>
    <property type="match status" value="1"/>
</dbReference>
<evidence type="ECO:0000255" key="1">
    <source>
        <dbReference type="HAMAP-Rule" id="MF_00016"/>
    </source>
</evidence>
<evidence type="ECO:0000256" key="2">
    <source>
        <dbReference type="SAM" id="MobiDB-lite"/>
    </source>
</evidence>
<sequence length="352" mass="38648">MIETDKLRAAAPERLISPQPADRQEDAVERALRPKRLAEYVGQAKIREQLEIFIHAAKKRSEALDHVLLFGPPGLGKTTLAHIVAAEMGVNLRQTSGPVLERAGDLAALLTNLEPHDVLFIDEIHRLSPVVEEILYPALEDFQIDIMIGEGPAARSVKLDLPPFTLVGATTRAGMLTNPLRDRFGIVSRLEFYTPDELGFIVSRSARLLNVEIDDDGALEIARRARGTPRIANRLLRRVRDYAEVKAGGHITRAVADAALRMLDVDSLGLDLMDRKMLSAMLEKFGGGPVGLDNLAAAIGESTDTIEDVIEPYLIQQGYLQRTPRGRMATHSIWQHFGLAPPRPGGTDLFGG</sequence>
<comment type="function">
    <text evidence="1">The RuvA-RuvB-RuvC complex processes Holliday junction (HJ) DNA during genetic recombination and DNA repair, while the RuvA-RuvB complex plays an important role in the rescue of blocked DNA replication forks via replication fork reversal (RFR). RuvA specifically binds to HJ cruciform DNA, conferring on it an open structure. The RuvB hexamer acts as an ATP-dependent pump, pulling dsDNA into and through the RuvAB complex. RuvB forms 2 homohexamers on either side of HJ DNA bound by 1 or 2 RuvA tetramers; 4 subunits per hexamer contact DNA at a time. Coordinated motions by a converter formed by DNA-disengaged RuvB subunits stimulates ATP hydrolysis and nucleotide exchange. Immobilization of the converter enables RuvB to convert the ATP-contained energy into a lever motion, pulling 2 nucleotides of DNA out of the RuvA tetramer per ATP hydrolyzed, thus driving DNA branch migration. The RuvB motors rotate together with the DNA substrate, which together with the progressing nucleotide cycle form the mechanistic basis for DNA recombination by continuous HJ branch migration. Branch migration allows RuvC to scan DNA until it finds its consensus sequence, where it cleaves and resolves cruciform DNA.</text>
</comment>
<comment type="catalytic activity">
    <reaction evidence="1">
        <text>ATP + H2O = ADP + phosphate + H(+)</text>
        <dbReference type="Rhea" id="RHEA:13065"/>
        <dbReference type="ChEBI" id="CHEBI:15377"/>
        <dbReference type="ChEBI" id="CHEBI:15378"/>
        <dbReference type="ChEBI" id="CHEBI:30616"/>
        <dbReference type="ChEBI" id="CHEBI:43474"/>
        <dbReference type="ChEBI" id="CHEBI:456216"/>
    </reaction>
</comment>
<comment type="subunit">
    <text evidence="1">Homohexamer. Forms an RuvA(8)-RuvB(12)-Holliday junction (HJ) complex. HJ DNA is sandwiched between 2 RuvA tetramers; dsDNA enters through RuvA and exits via RuvB. An RuvB hexamer assembles on each DNA strand where it exits the tetramer. Each RuvB hexamer is contacted by two RuvA subunits (via domain III) on 2 adjacent RuvB subunits; this complex drives branch migration. In the full resolvosome a probable DNA-RuvA(4)-RuvB(12)-RuvC(2) complex forms which resolves the HJ.</text>
</comment>
<comment type="subcellular location">
    <subcellularLocation>
        <location evidence="1">Cytoplasm</location>
    </subcellularLocation>
</comment>
<comment type="domain">
    <text evidence="1">Has 3 domains, the large (RuvB-L) and small ATPase (RuvB-S) domains and the C-terminal head (RuvB-H) domain. The head domain binds DNA, while the ATPase domains jointly bind ATP, ADP or are empty depending on the state of the subunit in the translocation cycle. During a single DNA translocation step the structure of each domain remains the same, but their relative positions change.</text>
</comment>
<comment type="similarity">
    <text evidence="1">Belongs to the RuvB family.</text>
</comment>
<organism>
    <name type="scientific">Azoarcus sp. (strain BH72)</name>
    <dbReference type="NCBI Taxonomy" id="418699"/>
    <lineage>
        <taxon>Bacteria</taxon>
        <taxon>Pseudomonadati</taxon>
        <taxon>Pseudomonadota</taxon>
        <taxon>Betaproteobacteria</taxon>
        <taxon>Rhodocyclales</taxon>
        <taxon>Zoogloeaceae</taxon>
        <taxon>Azoarcus</taxon>
    </lineage>
</organism>
<proteinExistence type="inferred from homology"/>
<accession>A1K313</accession>